<reference key="1">
    <citation type="journal article" date="2003" name="Proc. Natl. Acad. Sci. U.S.A.">
        <title>The complete genome sequence of the carcinogenic bacterium Helicobacter hepaticus.</title>
        <authorList>
            <person name="Suerbaum S."/>
            <person name="Josenhans C."/>
            <person name="Sterzenbach T."/>
            <person name="Drescher B."/>
            <person name="Brandt P."/>
            <person name="Bell M."/>
            <person name="Droege M."/>
            <person name="Fartmann B."/>
            <person name="Fischer H.-P."/>
            <person name="Ge Z."/>
            <person name="Hoerster A."/>
            <person name="Holland R."/>
            <person name="Klein K."/>
            <person name="Koenig J."/>
            <person name="Macko L."/>
            <person name="Mendz G.L."/>
            <person name="Nyakatura G."/>
            <person name="Schauer D.B."/>
            <person name="Shen Z."/>
            <person name="Weber J."/>
            <person name="Frosch M."/>
            <person name="Fox J.G."/>
        </authorList>
    </citation>
    <scope>NUCLEOTIDE SEQUENCE [LARGE SCALE GENOMIC DNA]</scope>
    <source>
        <strain>ATCC 51449 / 3B1</strain>
    </source>
</reference>
<organism>
    <name type="scientific">Helicobacter hepaticus (strain ATCC 51449 / 3B1)</name>
    <dbReference type="NCBI Taxonomy" id="235279"/>
    <lineage>
        <taxon>Bacteria</taxon>
        <taxon>Pseudomonadati</taxon>
        <taxon>Campylobacterota</taxon>
        <taxon>Epsilonproteobacteria</taxon>
        <taxon>Campylobacterales</taxon>
        <taxon>Helicobacteraceae</taxon>
        <taxon>Helicobacter</taxon>
    </lineage>
</organism>
<sequence length="401" mass="43947">MNILVINCGSSSLKFQLIDTDTEKVLANGICDRIGIEGSVLQYKNKEGKKSEKKEAMPNHTKAIEMVLEALTNKQNGAISSLDDIRAIGHRVVHGGEFFKESVLINDTVIAHIKECSDLAPLHNPANLMGIDVCKQKMPNTPMVAVFDTAFHQSMPPQAYTYGVPYEWYEKHKVRRYGFHGTSHKYVSQRTTEFLGLDYHNSKIIVCHLGNGSSISAIKNGKCVDTSMGLTPLEGLIMGTRCGDLDPAILEYISKREDLDIQSILNVLNKKSGVLGISGVSSDFRDLLDADLGGNERAKLARLAFAYRVMKYVGAYCAAMNGVDAVSFCAGVGENAKFIRGMIVKHLEFLGVELDEEANNICGQEAIISTANSKVKVCVIPTNEELVIARDTRAIVSQLKD</sequence>
<protein>
    <recommendedName>
        <fullName evidence="1">Acetate kinase</fullName>
        <ecNumber evidence="1">2.7.2.1</ecNumber>
    </recommendedName>
    <alternativeName>
        <fullName evidence="1">Acetokinase</fullName>
    </alternativeName>
</protein>
<feature type="chain" id="PRO_0000107567" description="Acetate kinase">
    <location>
        <begin position="1"/>
        <end position="401"/>
    </location>
</feature>
<feature type="active site" description="Proton donor/acceptor" evidence="1">
    <location>
        <position position="148"/>
    </location>
</feature>
<feature type="binding site" evidence="1">
    <location>
        <position position="7"/>
    </location>
    <ligand>
        <name>Mg(2+)</name>
        <dbReference type="ChEBI" id="CHEBI:18420"/>
    </ligand>
</feature>
<feature type="binding site" evidence="1">
    <location>
        <position position="14"/>
    </location>
    <ligand>
        <name>ATP</name>
        <dbReference type="ChEBI" id="CHEBI:30616"/>
    </ligand>
</feature>
<feature type="binding site" evidence="1">
    <location>
        <position position="91"/>
    </location>
    <ligand>
        <name>substrate</name>
    </ligand>
</feature>
<feature type="binding site" evidence="1">
    <location>
        <begin position="208"/>
        <end position="212"/>
    </location>
    <ligand>
        <name>ATP</name>
        <dbReference type="ChEBI" id="CHEBI:30616"/>
    </ligand>
</feature>
<feature type="binding site" evidence="1">
    <location>
        <begin position="283"/>
        <end position="285"/>
    </location>
    <ligand>
        <name>ATP</name>
        <dbReference type="ChEBI" id="CHEBI:30616"/>
    </ligand>
</feature>
<feature type="binding site" evidence="1">
    <location>
        <begin position="331"/>
        <end position="335"/>
    </location>
    <ligand>
        <name>ATP</name>
        <dbReference type="ChEBI" id="CHEBI:30616"/>
    </ligand>
</feature>
<feature type="binding site" evidence="1">
    <location>
        <position position="384"/>
    </location>
    <ligand>
        <name>Mg(2+)</name>
        <dbReference type="ChEBI" id="CHEBI:18420"/>
    </ligand>
</feature>
<feature type="site" description="Transition state stabilizer" evidence="1">
    <location>
        <position position="180"/>
    </location>
</feature>
<feature type="site" description="Transition state stabilizer" evidence="1">
    <location>
        <position position="241"/>
    </location>
</feature>
<evidence type="ECO:0000255" key="1">
    <source>
        <dbReference type="HAMAP-Rule" id="MF_00020"/>
    </source>
</evidence>
<comment type="function">
    <text evidence="1">Catalyzes the formation of acetyl phosphate from acetate and ATP. Can also catalyze the reverse reaction.</text>
</comment>
<comment type="catalytic activity">
    <reaction evidence="1">
        <text>acetate + ATP = acetyl phosphate + ADP</text>
        <dbReference type="Rhea" id="RHEA:11352"/>
        <dbReference type="ChEBI" id="CHEBI:22191"/>
        <dbReference type="ChEBI" id="CHEBI:30089"/>
        <dbReference type="ChEBI" id="CHEBI:30616"/>
        <dbReference type="ChEBI" id="CHEBI:456216"/>
        <dbReference type="EC" id="2.7.2.1"/>
    </reaction>
</comment>
<comment type="cofactor">
    <cofactor evidence="1">
        <name>Mg(2+)</name>
        <dbReference type="ChEBI" id="CHEBI:18420"/>
    </cofactor>
    <cofactor evidence="1">
        <name>Mn(2+)</name>
        <dbReference type="ChEBI" id="CHEBI:29035"/>
    </cofactor>
    <text evidence="1">Mg(2+). Can also accept Mn(2+).</text>
</comment>
<comment type="pathway">
    <text evidence="1">Metabolic intermediate biosynthesis; acetyl-CoA biosynthesis; acetyl-CoA from acetate: step 1/2.</text>
</comment>
<comment type="subunit">
    <text evidence="1">Homodimer.</text>
</comment>
<comment type="subcellular location">
    <subcellularLocation>
        <location evidence="1">Cytoplasm</location>
    </subcellularLocation>
</comment>
<comment type="similarity">
    <text evidence="1">Belongs to the acetokinase family.</text>
</comment>
<name>ACKA_HELHP</name>
<proteinExistence type="inferred from homology"/>
<dbReference type="EC" id="2.7.2.1" evidence="1"/>
<dbReference type="EMBL" id="AE017125">
    <property type="protein sequence ID" value="AAP77905.1"/>
    <property type="molecule type" value="Genomic_DNA"/>
</dbReference>
<dbReference type="RefSeq" id="WP_011116148.1">
    <property type="nucleotide sequence ID" value="NC_004917.1"/>
</dbReference>
<dbReference type="SMR" id="Q7VGL3"/>
<dbReference type="STRING" id="235279.HH_1308"/>
<dbReference type="KEGG" id="hhe:HH_1308"/>
<dbReference type="eggNOG" id="COG0282">
    <property type="taxonomic scope" value="Bacteria"/>
</dbReference>
<dbReference type="HOGENOM" id="CLU_020352_0_1_7"/>
<dbReference type="OrthoDB" id="9802453at2"/>
<dbReference type="UniPathway" id="UPA00340">
    <property type="reaction ID" value="UER00458"/>
</dbReference>
<dbReference type="Proteomes" id="UP000002495">
    <property type="component" value="Chromosome"/>
</dbReference>
<dbReference type="GO" id="GO:0005737">
    <property type="term" value="C:cytoplasm"/>
    <property type="evidence" value="ECO:0007669"/>
    <property type="project" value="UniProtKB-SubCell"/>
</dbReference>
<dbReference type="GO" id="GO:0008776">
    <property type="term" value="F:acetate kinase activity"/>
    <property type="evidence" value="ECO:0007669"/>
    <property type="project" value="UniProtKB-UniRule"/>
</dbReference>
<dbReference type="GO" id="GO:0005524">
    <property type="term" value="F:ATP binding"/>
    <property type="evidence" value="ECO:0007669"/>
    <property type="project" value="UniProtKB-KW"/>
</dbReference>
<dbReference type="GO" id="GO:0000287">
    <property type="term" value="F:magnesium ion binding"/>
    <property type="evidence" value="ECO:0007669"/>
    <property type="project" value="UniProtKB-UniRule"/>
</dbReference>
<dbReference type="GO" id="GO:0006083">
    <property type="term" value="P:acetate metabolic process"/>
    <property type="evidence" value="ECO:0007669"/>
    <property type="project" value="TreeGrafter"/>
</dbReference>
<dbReference type="GO" id="GO:0006085">
    <property type="term" value="P:acetyl-CoA biosynthetic process"/>
    <property type="evidence" value="ECO:0007669"/>
    <property type="project" value="UniProtKB-UniRule"/>
</dbReference>
<dbReference type="CDD" id="cd24010">
    <property type="entry name" value="ASKHA_NBD_AcK_PK"/>
    <property type="match status" value="1"/>
</dbReference>
<dbReference type="Gene3D" id="3.30.420.40">
    <property type="match status" value="2"/>
</dbReference>
<dbReference type="HAMAP" id="MF_00020">
    <property type="entry name" value="Acetate_kinase"/>
    <property type="match status" value="1"/>
</dbReference>
<dbReference type="InterPro" id="IPR004372">
    <property type="entry name" value="Ac/propionate_kinase"/>
</dbReference>
<dbReference type="InterPro" id="IPR000890">
    <property type="entry name" value="Aliphatic_acid_kin_short-chain"/>
</dbReference>
<dbReference type="InterPro" id="IPR023865">
    <property type="entry name" value="Aliphatic_acid_kinase_CS"/>
</dbReference>
<dbReference type="InterPro" id="IPR043129">
    <property type="entry name" value="ATPase_NBD"/>
</dbReference>
<dbReference type="NCBIfam" id="TIGR00016">
    <property type="entry name" value="ackA"/>
    <property type="match status" value="1"/>
</dbReference>
<dbReference type="PANTHER" id="PTHR21060">
    <property type="entry name" value="ACETATE KINASE"/>
    <property type="match status" value="1"/>
</dbReference>
<dbReference type="PANTHER" id="PTHR21060:SF15">
    <property type="entry name" value="ACETATE KINASE-RELATED"/>
    <property type="match status" value="1"/>
</dbReference>
<dbReference type="Pfam" id="PF00871">
    <property type="entry name" value="Acetate_kinase"/>
    <property type="match status" value="1"/>
</dbReference>
<dbReference type="PIRSF" id="PIRSF000722">
    <property type="entry name" value="Acetate_prop_kin"/>
    <property type="match status" value="1"/>
</dbReference>
<dbReference type="PRINTS" id="PR00471">
    <property type="entry name" value="ACETATEKNASE"/>
</dbReference>
<dbReference type="SUPFAM" id="SSF53067">
    <property type="entry name" value="Actin-like ATPase domain"/>
    <property type="match status" value="2"/>
</dbReference>
<dbReference type="PROSITE" id="PS01075">
    <property type="entry name" value="ACETATE_KINASE_1"/>
    <property type="match status" value="1"/>
</dbReference>
<dbReference type="PROSITE" id="PS01076">
    <property type="entry name" value="ACETATE_KINASE_2"/>
    <property type="match status" value="1"/>
</dbReference>
<gene>
    <name evidence="1" type="primary">ackA</name>
    <name type="ordered locus">HH_1308</name>
</gene>
<keyword id="KW-0067">ATP-binding</keyword>
<keyword id="KW-0963">Cytoplasm</keyword>
<keyword id="KW-0418">Kinase</keyword>
<keyword id="KW-0460">Magnesium</keyword>
<keyword id="KW-0479">Metal-binding</keyword>
<keyword id="KW-0547">Nucleotide-binding</keyword>
<keyword id="KW-1185">Reference proteome</keyword>
<keyword id="KW-0808">Transferase</keyword>
<accession>Q7VGL3</accession>